<gene>
    <name evidence="16" type="primary">sakA</name>
    <name evidence="16" type="synonym">hog1</name>
    <name type="synonym">hogA</name>
    <name type="synonym">osm1</name>
    <name type="ORF">AfA5C11.10</name>
    <name type="ORF">AFUA_1G12940</name>
</gene>
<comment type="function">
    <text evidence="5 6 7 8 10 11 12 15">Proline-directed serine/threonine-protein kinase involved in a signal transduction pathway that is activated by changes in the osmolarity of the extracellular environment (PubMed:16702099, PubMed:24312504, PubMed:25459537, PubMed:27538790, PubMed:32743127). Controls osmotic regulation of transcription of target genes (PubMed:16702099). Involved in environmental stress response (PubMed:22678624). With mpkC, plays a redundant or cooperative role in the conidial stress resistance (PubMed:25459537). Also plays a supportive role in osmotic stress adaptation when sakA is deficient (PubMed:25459537). Involved in paradoxical growth, the cell wall integrity (CWI) pathway and biofilm formation (PubMed:26878695, PubMed:32743127). Also collaborates with mpkC to allow ful virulence in a neutropenic murine model ofinvasive pulmonary aspergillosis (PubMed:26878695). MpkC and sakA have both independent and collaborative functions during the transcriptional response to transient osmotic stress and sakA not only seems to modulate pathways involved in nucleotide, fatty acid, nitrogen and organic acid biosynthesis but is also important for the activation of genes involved in mitochondrial and endoplasmic reticulum functions (PubMed:27706915).</text>
</comment>
<comment type="catalytic activity">
    <reaction evidence="1">
        <text>L-seryl-[protein] + ATP = O-phospho-L-seryl-[protein] + ADP + H(+)</text>
        <dbReference type="Rhea" id="RHEA:17989"/>
        <dbReference type="Rhea" id="RHEA-COMP:9863"/>
        <dbReference type="Rhea" id="RHEA-COMP:11604"/>
        <dbReference type="ChEBI" id="CHEBI:15378"/>
        <dbReference type="ChEBI" id="CHEBI:29999"/>
        <dbReference type="ChEBI" id="CHEBI:30616"/>
        <dbReference type="ChEBI" id="CHEBI:83421"/>
        <dbReference type="ChEBI" id="CHEBI:456216"/>
        <dbReference type="EC" id="2.7.11.24"/>
    </reaction>
    <physiologicalReaction direction="left-to-right" evidence="1">
        <dbReference type="Rhea" id="RHEA:17990"/>
    </physiologicalReaction>
</comment>
<comment type="catalytic activity">
    <reaction evidence="1">
        <text>L-threonyl-[protein] + ATP = O-phospho-L-threonyl-[protein] + ADP + H(+)</text>
        <dbReference type="Rhea" id="RHEA:46608"/>
        <dbReference type="Rhea" id="RHEA-COMP:11060"/>
        <dbReference type="Rhea" id="RHEA-COMP:11605"/>
        <dbReference type="ChEBI" id="CHEBI:15378"/>
        <dbReference type="ChEBI" id="CHEBI:30013"/>
        <dbReference type="ChEBI" id="CHEBI:30616"/>
        <dbReference type="ChEBI" id="CHEBI:61977"/>
        <dbReference type="ChEBI" id="CHEBI:456216"/>
        <dbReference type="EC" id="2.7.11.24"/>
    </reaction>
    <physiologicalReaction direction="left-to-right" evidence="1">
        <dbReference type="Rhea" id="RHEA:46609"/>
    </physiologicalReaction>
</comment>
<comment type="cofactor">
    <cofactor evidence="2">
        <name>Mg(2+)</name>
        <dbReference type="ChEBI" id="CHEBI:18420"/>
    </cofactor>
</comment>
<comment type="activity regulation">
    <text evidence="1 9">Activated by tyrosine and threonine phosphorylation (By similarity). Deactivated by protein phosphatase 2C homolog 2 ptcB (PubMed:25597841).</text>
</comment>
<comment type="subunit">
    <text evidence="13 14">Interacts with the AGC kinase ypkA (PubMed:30692984). Interacts with sakA upon osmotic and cell wall stresses (PubMed:31134001).</text>
</comment>
<comment type="subcellular location">
    <subcellularLocation>
        <location evidence="10 11">Cytoplasm</location>
    </subcellularLocation>
    <subcellularLocation>
        <location evidence="10 11">Nucleus</location>
    </subcellularLocation>
    <text evidence="10 11">Translocates to the nucleus upon osmotic stress and cell wall damage.</text>
</comment>
<comment type="domain">
    <text evidence="17">The TXY motif contains the threonine and tyrosine residues whose phosphorylation activates the MAP kinases.</text>
</comment>
<comment type="PTM">
    <text evidence="5 6 7 9 11">Dually phosphorylated on Thr-171 and Tyr-173, which activates the enzyme (PubMed:16702099, PubMed:24312504, PubMed:27538790). Environmental stresses such as high temperature, osmotic stress, cold stress or ethanol stress modulate the activation of sakA via phosphorylation (PubMed:22678624, PubMed:24312504, PubMed:25597841).</text>
</comment>
<comment type="disruption phenotype">
    <text evidence="8 10 15">Renders conidia sensitive to heat stress and oxidative stress as when mpkC is also deleted (PubMed:25459537). Leads to delayed growth at high concentration of NaCl or sorbitol (PubMed:25459537). Leads to reduced mpkA phosphorylation, and the double mpkC and sakA deletion completely abolishes mpkA phosphorylation (PubMed:26878695). Affects the cell surface and the extracellular matrix during biofilm formation and reduced the adherence (PubMed:32743127).</text>
</comment>
<comment type="similarity">
    <text evidence="3">Belongs to the protein kinase superfamily. Ser/Thr protein kinase family. MAP kinase subfamily. HOG1 sub-subfamily.</text>
</comment>
<comment type="sequence caution" evidence="17">
    <conflict type="erroneous gene model prediction">
        <sequence resource="EMBL-CDS" id="CAF32009"/>
    </conflict>
</comment>
<keyword id="KW-0067">ATP-binding</keyword>
<keyword id="KW-0963">Cytoplasm</keyword>
<keyword id="KW-0418">Kinase</keyword>
<keyword id="KW-0547">Nucleotide-binding</keyword>
<keyword id="KW-0539">Nucleus</keyword>
<keyword id="KW-0597">Phosphoprotein</keyword>
<keyword id="KW-1185">Reference proteome</keyword>
<keyword id="KW-0723">Serine/threonine-protein kinase</keyword>
<keyword id="KW-0808">Transferase</keyword>
<keyword id="KW-0843">Virulence</keyword>
<proteinExistence type="evidence at protein level"/>
<feature type="chain" id="PRO_0000289674" description="Mitogen-activated protein kinase sakA">
    <location>
        <begin position="1"/>
        <end position="366"/>
    </location>
</feature>
<feature type="domain" description="Protein kinase" evidence="3">
    <location>
        <begin position="20"/>
        <end position="299"/>
    </location>
</feature>
<feature type="short sequence motif" description="TXY" evidence="1">
    <location>
        <begin position="171"/>
        <end position="173"/>
    </location>
</feature>
<feature type="active site" description="Proton acceptor" evidence="3 4">
    <location>
        <position position="141"/>
    </location>
</feature>
<feature type="binding site" evidence="3">
    <location>
        <begin position="26"/>
        <end position="34"/>
    </location>
    <ligand>
        <name>ATP</name>
        <dbReference type="ChEBI" id="CHEBI:30616"/>
    </ligand>
</feature>
<feature type="binding site" evidence="3">
    <location>
        <position position="49"/>
    </location>
    <ligand>
        <name>ATP</name>
        <dbReference type="ChEBI" id="CHEBI:30616"/>
    </ligand>
</feature>
<feature type="modified residue" description="Phosphothreonine" evidence="11">
    <location>
        <position position="171"/>
    </location>
</feature>
<feature type="modified residue" description="Phosphotyrosine" evidence="11">
    <location>
        <position position="173"/>
    </location>
</feature>
<feature type="sequence conflict" description="In Ref. 1; CAD28436." evidence="17" ref="1">
    <original>TD</original>
    <variation>N</variation>
    <location>
        <begin position="21"/>
        <end position="22"/>
    </location>
</feature>
<evidence type="ECO:0000250" key="1">
    <source>
        <dbReference type="UniProtKB" id="P32485"/>
    </source>
</evidence>
<evidence type="ECO:0000250" key="2">
    <source>
        <dbReference type="UniProtKB" id="Q16539"/>
    </source>
</evidence>
<evidence type="ECO:0000255" key="3">
    <source>
        <dbReference type="PROSITE-ProRule" id="PRU00159"/>
    </source>
</evidence>
<evidence type="ECO:0000255" key="4">
    <source>
        <dbReference type="PROSITE-ProRule" id="PRU10027"/>
    </source>
</evidence>
<evidence type="ECO:0000269" key="5">
    <source>
    </source>
</evidence>
<evidence type="ECO:0000269" key="6">
    <source>
    </source>
</evidence>
<evidence type="ECO:0000269" key="7">
    <source>
    </source>
</evidence>
<evidence type="ECO:0000269" key="8">
    <source>
    </source>
</evidence>
<evidence type="ECO:0000269" key="9">
    <source>
    </source>
</evidence>
<evidence type="ECO:0000269" key="10">
    <source>
    </source>
</evidence>
<evidence type="ECO:0000269" key="11">
    <source>
    </source>
</evidence>
<evidence type="ECO:0000269" key="12">
    <source>
    </source>
</evidence>
<evidence type="ECO:0000269" key="13">
    <source>
    </source>
</evidence>
<evidence type="ECO:0000269" key="14">
    <source>
    </source>
</evidence>
<evidence type="ECO:0000269" key="15">
    <source>
    </source>
</evidence>
<evidence type="ECO:0000303" key="16">
    <source>
    </source>
</evidence>
<evidence type="ECO:0000305" key="17"/>
<reference key="1">
    <citation type="journal article" date="2004" name="Fungal Genet. Biol.">
        <title>Insight into the genome of Aspergillus fumigatus: analysis of a 922 kb region encompassing the nitrate assimilation gene cluster.</title>
        <authorList>
            <person name="Pain A."/>
            <person name="Woodward J.R."/>
            <person name="Quail M.A."/>
            <person name="Anderson M.J."/>
            <person name="Clark R."/>
            <person name="Collins M."/>
            <person name="Fosker N."/>
            <person name="Fraser A."/>
            <person name="Harris D.E."/>
            <person name="Larke N."/>
            <person name="Murphy L.D."/>
            <person name="Humphray S."/>
            <person name="O'Neil S."/>
            <person name="Pertea M."/>
            <person name="Price C."/>
            <person name="Rabbinowitsch E."/>
            <person name="Rajandream M.A."/>
            <person name="Salzberg S.L."/>
            <person name="Saunders D."/>
            <person name="Seeger K."/>
            <person name="Sharp S."/>
            <person name="Warren T."/>
            <person name="Denning D.W."/>
            <person name="Barrell B.G."/>
            <person name="Hall N."/>
        </authorList>
    </citation>
    <scope>NUCLEOTIDE SEQUENCE [LARGE SCALE GENOMIC DNA]</scope>
    <source>
        <strain>ATCC MYA-4609 / CBS 101355 / FGSC A1100 / Af293</strain>
    </source>
</reference>
<reference key="2">
    <citation type="journal article" date="2005" name="Nature">
        <title>Genomic sequence of the pathogenic and allergenic filamentous fungus Aspergillus fumigatus.</title>
        <authorList>
            <person name="Nierman W.C."/>
            <person name="Pain A."/>
            <person name="Anderson M.J."/>
            <person name="Wortman J.R."/>
            <person name="Kim H.S."/>
            <person name="Arroyo J."/>
            <person name="Berriman M."/>
            <person name="Abe K."/>
            <person name="Archer D.B."/>
            <person name="Bermejo C."/>
            <person name="Bennett J.W."/>
            <person name="Bowyer P."/>
            <person name="Chen D."/>
            <person name="Collins M."/>
            <person name="Coulsen R."/>
            <person name="Davies R."/>
            <person name="Dyer P.S."/>
            <person name="Farman M.L."/>
            <person name="Fedorova N."/>
            <person name="Fedorova N.D."/>
            <person name="Feldblyum T.V."/>
            <person name="Fischer R."/>
            <person name="Fosker N."/>
            <person name="Fraser A."/>
            <person name="Garcia J.L."/>
            <person name="Garcia M.J."/>
            <person name="Goble A."/>
            <person name="Goldman G.H."/>
            <person name="Gomi K."/>
            <person name="Griffith-Jones S."/>
            <person name="Gwilliam R."/>
            <person name="Haas B.J."/>
            <person name="Haas H."/>
            <person name="Harris D.E."/>
            <person name="Horiuchi H."/>
            <person name="Huang J."/>
            <person name="Humphray S."/>
            <person name="Jimenez J."/>
            <person name="Keller N."/>
            <person name="Khouri H."/>
            <person name="Kitamoto K."/>
            <person name="Kobayashi T."/>
            <person name="Konzack S."/>
            <person name="Kulkarni R."/>
            <person name="Kumagai T."/>
            <person name="Lafton A."/>
            <person name="Latge J.-P."/>
            <person name="Li W."/>
            <person name="Lord A."/>
            <person name="Lu C."/>
            <person name="Majoros W.H."/>
            <person name="May G.S."/>
            <person name="Miller B.L."/>
            <person name="Mohamoud Y."/>
            <person name="Molina M."/>
            <person name="Monod M."/>
            <person name="Mouyna I."/>
            <person name="Mulligan S."/>
            <person name="Murphy L.D."/>
            <person name="O'Neil S."/>
            <person name="Paulsen I."/>
            <person name="Penalva M.A."/>
            <person name="Pertea M."/>
            <person name="Price C."/>
            <person name="Pritchard B.L."/>
            <person name="Quail M.A."/>
            <person name="Rabbinowitsch E."/>
            <person name="Rawlins N."/>
            <person name="Rajandream M.A."/>
            <person name="Reichard U."/>
            <person name="Renauld H."/>
            <person name="Robson G.D."/>
            <person name="Rodriguez de Cordoba S."/>
            <person name="Rodriguez-Pena J.M."/>
            <person name="Ronning C.M."/>
            <person name="Rutter S."/>
            <person name="Salzberg S.L."/>
            <person name="Sanchez M."/>
            <person name="Sanchez-Ferrero J.C."/>
            <person name="Saunders D."/>
            <person name="Seeger K."/>
            <person name="Squares R."/>
            <person name="Squares S."/>
            <person name="Takeuchi M."/>
            <person name="Tekaia F."/>
            <person name="Turner G."/>
            <person name="Vazquez de Aldana C.R."/>
            <person name="Weidman J."/>
            <person name="White O."/>
            <person name="Woodward J.R."/>
            <person name="Yu J.-H."/>
            <person name="Fraser C.M."/>
            <person name="Galagan J.E."/>
            <person name="Asai K."/>
            <person name="Machida M."/>
            <person name="Hall N."/>
            <person name="Barrell B.G."/>
            <person name="Denning D.W."/>
        </authorList>
    </citation>
    <scope>NUCLEOTIDE SEQUENCE [LARGE SCALE GENOMIC DNA]</scope>
    <source>
        <strain>ATCC MYA-4609 / CBS 101355 / FGSC A1100 / Af293</strain>
    </source>
</reference>
<reference key="3">
    <citation type="journal article" date="2006" name="Med. Mycol.">
        <title>The role of the sakA (Hog1) and tcsB (sln1) genes in the oxidant adaptation of Aspergillus fumigatus.</title>
        <authorList>
            <person name="Du C."/>
            <person name="Sarfati J."/>
            <person name="Latge J.-P."/>
            <person name="Calderone R."/>
        </authorList>
    </citation>
    <scope>FUNCTION</scope>
    <scope>PHOSPHORYLATION</scope>
</reference>
<reference key="4">
    <citation type="journal article" date="2012" name="Mycopathologia">
        <title>HOG-MAPK signaling regulates the adaptive responses of Aspergillus fumigatus to thermal stress and other related stress.</title>
        <authorList>
            <person name="Ji Y."/>
            <person name="Yang F."/>
            <person name="Ma D."/>
            <person name="Zhang J."/>
            <person name="Wan Z."/>
            <person name="Liu W."/>
            <person name="Li R."/>
        </authorList>
    </citation>
    <scope>FUNCTION</scope>
    <scope>PHOSPHORYLATION</scope>
</reference>
<reference key="5">
    <citation type="journal article" date="2013" name="PLoS ONE">
        <title>NikA/TcsC histidine kinase is involved in conidiation, hyphal morphology, and responses to osmotic stress and antifungal chemicals in Aspergillus fumigatus.</title>
        <authorList>
            <person name="Hagiwara D."/>
            <person name="Takahashi-Nakaguchi A."/>
            <person name="Toyotome T."/>
            <person name="Yoshimi A."/>
            <person name="Abe K."/>
            <person name="Kamei K."/>
            <person name="Gonoi T."/>
            <person name="Kawamoto S."/>
        </authorList>
    </citation>
    <scope>FUNCTION</scope>
    <scope>PHOSPHORYLATION</scope>
</reference>
<reference key="6">
    <citation type="journal article" date="2014" name="Fungal Genet. Biol.">
        <title>The role of AtfA and HOG MAPK pathway in stress tolerance in conidia of Aspergillus fumigatus.</title>
        <authorList>
            <person name="Hagiwara D."/>
            <person name="Suzuki S."/>
            <person name="Kamei K."/>
            <person name="Gonoi T."/>
            <person name="Kawamoto S."/>
        </authorList>
    </citation>
    <scope>FUNCTION</scope>
    <scope>DISRUPTION PHENOTYPE</scope>
</reference>
<reference key="7">
    <citation type="journal article" date="2015" name="Mol. Microbiol.">
        <title>High osmolarity glycerol response PtcB phosphatase is important for Aspergillus fumigatus virulence.</title>
        <authorList>
            <person name="Winkelstroeter L.K."/>
            <person name="Bom V.L."/>
            <person name="de Castro P.A."/>
            <person name="Ramalho L.N."/>
            <person name="Goldman M.H."/>
            <person name="Brown N.A."/>
            <person name="Rajendran R."/>
            <person name="Ramage G."/>
            <person name="Bovier E."/>
            <person name="Dos Reis T.F."/>
            <person name="Savoldi M."/>
            <person name="Hagiwara D."/>
            <person name="Goldman G.H."/>
        </authorList>
    </citation>
    <scope>ACTIVITY REGULATION</scope>
    <scope>PHOSPHORYLATION</scope>
</reference>
<reference key="8">
    <citation type="journal article" date="2016" name="Mol. Microbiol.">
        <title>Mitogen activated protein kinases SakA(HOG1) and MpkC collaborate for Aspergillus fumigatus virulence.</title>
        <authorList>
            <person name="Bruder Nascimento A.C."/>
            <person name="Dos Reis T.F."/>
            <person name="de Castro P.A."/>
            <person name="Hori J.I."/>
            <person name="Bom V.L."/>
            <person name="de Assis L.J."/>
            <person name="Ramalho L.N."/>
            <person name="Rocha M.C."/>
            <person name="Malavazi I."/>
            <person name="Brown N.A."/>
            <person name="Valiante V."/>
            <person name="Brakhage A.A."/>
            <person name="Hagiwara D."/>
            <person name="Goldman G.H."/>
        </authorList>
    </citation>
    <scope>FUNCTION</scope>
    <scope>DISRUPTION PHENOTYPE</scope>
    <scope>SUBCELLULAR LOCATION</scope>
    <scope>CATALYTIC ACTIVITY</scope>
</reference>
<reference key="9">
    <citation type="journal article" date="2016" name="Mol. Microbiol.">
        <title>The Aspergillus fumigatus SchASCH9 kinase modulates SakAHOG1 MAP kinase activity and it is essential for virulence.</title>
        <authorList>
            <person name="Alves de Castro P."/>
            <person name="Dos Reis T.F."/>
            <person name="Dolan S.K."/>
            <person name="Oliveira Manfiolli A."/>
            <person name="Brown N.A."/>
            <person name="Jones G.W."/>
            <person name="Doyle S."/>
            <person name="Riano-Pachon D.M."/>
            <person name="Squina F.M."/>
            <person name="Caldana C."/>
            <person name="Singh A."/>
            <person name="Del Poeta M."/>
            <person name="Hagiwara D."/>
            <person name="Silva-Rocha R."/>
            <person name="Goldman G.H."/>
        </authorList>
    </citation>
    <scope>FUNCTION</scope>
    <scope>PHOSPHORYLATION AT THR-171 AND TYR-173</scope>
    <scope>CATALYTIC ACTIVITY</scope>
    <scope>SUBCELLULAR LOCATION</scope>
</reference>
<reference key="10">
    <citation type="journal article" date="2017" name="Cell. Microbiol.">
        <title>Genome-wide transcriptome analysis of Aspergillus fumigatus exposed to osmotic stress reveals regulators of osmotic and cell wall stresses that are SakA(HOG1) and MpkC dependent.</title>
        <authorList>
            <person name="Pereira Silva L."/>
            <person name="Alves de Castro P."/>
            <person name="Dos Reis T.F."/>
            <person name="Paziani M.H."/>
            <person name="Von Zeska Kress M.R."/>
            <person name="Riano-Pachon D.M."/>
            <person name="Hagiwara D."/>
            <person name="Ries L.N."/>
            <person name="Brown N.A."/>
            <person name="Goldman G.H."/>
        </authorList>
    </citation>
    <scope>FUNCTION</scope>
</reference>
<reference key="11">
    <citation type="journal article" date="2018" name="Cell Surf.">
        <title>Mitogen activated protein kinases (MAPK) and protein phosphatases are involved in Aspergillus fumigatus adhesion and biofilm formation.</title>
        <authorList>
            <person name="Manfiolli A.O."/>
            <person name="Dos Reis T.F."/>
            <person name="de Assis L.J."/>
            <person name="de Castro P.A."/>
            <person name="Silva L.P."/>
            <person name="Hori J.I."/>
            <person name="Walker L.A."/>
            <person name="Munro C.A."/>
            <person name="Rajendran R."/>
            <person name="Ramage G."/>
            <person name="Goldman G.H."/>
        </authorList>
    </citation>
    <scope>FUNCTION</scope>
    <scope>DISRUPTION PHENOTYPE</scope>
</reference>
<reference key="12">
    <citation type="journal article" date="2018" name="Front. Microbiol.">
        <title>The AGC Kinase YpkA Regulates Sphingolipids Biosynthesis and Physically Interacts With SakA MAP Kinase in Aspergillus fumigatus.</title>
        <authorList>
            <person name="Fabri J.H.T.M."/>
            <person name="Godoy N.L."/>
            <person name="Rocha M.C."/>
            <person name="Munshi M."/>
            <person name="Cocio T.A."/>
            <person name="von Zeska Kress M.R."/>
            <person name="Fill T.P."/>
            <person name="da Cunha A.F."/>
            <person name="Del Poeta M."/>
            <person name="Malavazi I."/>
        </authorList>
    </citation>
    <scope>FUNCTION</scope>
    <scope>INTERACTION WITH YPKA</scope>
</reference>
<reference key="13">
    <citation type="journal article" date="2019" name="Front. Microbiol.">
        <title>Aspergillus fumigatus high osmolarity glycerol mitogen activated protein kinases sakA and mpkC physically interact during osmotic and cell wall Stresses.</title>
        <authorList>
            <person name="Manfiolli A.O."/>
            <person name="Mattos E.C."/>
            <person name="de Assis L.J."/>
            <person name="Silva L.P."/>
            <person name="Ulas M."/>
            <person name="Brown N.A."/>
            <person name="Silva-Rocha R."/>
            <person name="Bayram O."/>
            <person name="Goldman G.H."/>
        </authorList>
    </citation>
    <scope>FUNCTION</scope>
    <scope>INTERACTION WITH MPKC</scope>
</reference>
<name>HOG1_ASPFU</name>
<dbReference type="EC" id="2.7.11.24" evidence="10 11"/>
<dbReference type="EMBL" id="AL713629">
    <property type="protein sequence ID" value="CAD28436.1"/>
    <property type="molecule type" value="Genomic_DNA"/>
</dbReference>
<dbReference type="EMBL" id="BX649606">
    <property type="protein sequence ID" value="CAF32009.1"/>
    <property type="status" value="ALT_SEQ"/>
    <property type="molecule type" value="Genomic_DNA"/>
</dbReference>
<dbReference type="EMBL" id="AAHF01000004">
    <property type="protein sequence ID" value="EAL90626.1"/>
    <property type="molecule type" value="Genomic_DNA"/>
</dbReference>
<dbReference type="RefSeq" id="XP_752664.1">
    <property type="nucleotide sequence ID" value="XM_747571.1"/>
</dbReference>
<dbReference type="SMR" id="Q4WSF6"/>
<dbReference type="FunCoup" id="Q4WSF6">
    <property type="interactions" value="592"/>
</dbReference>
<dbReference type="STRING" id="330879.Q4WSF6"/>
<dbReference type="EnsemblFungi" id="EAL90626">
    <property type="protein sequence ID" value="EAL90626"/>
    <property type="gene ID" value="AFUA_1G12940"/>
</dbReference>
<dbReference type="GeneID" id="3510276"/>
<dbReference type="KEGG" id="afm:AFUA_1G12940"/>
<dbReference type="VEuPathDB" id="FungiDB:Afu1g12940"/>
<dbReference type="eggNOG" id="KOG0660">
    <property type="taxonomic scope" value="Eukaryota"/>
</dbReference>
<dbReference type="HOGENOM" id="CLU_000288_181_1_1"/>
<dbReference type="InParanoid" id="Q4WSF6"/>
<dbReference type="OMA" id="NRYTDLN"/>
<dbReference type="OrthoDB" id="192887at2759"/>
<dbReference type="PHI-base" id="PHI:6084"/>
<dbReference type="Proteomes" id="UP000002530">
    <property type="component" value="Chromosome 1"/>
</dbReference>
<dbReference type="GO" id="GO:0005737">
    <property type="term" value="C:cytoplasm"/>
    <property type="evidence" value="ECO:0000318"/>
    <property type="project" value="GO_Central"/>
</dbReference>
<dbReference type="GO" id="GO:0005634">
    <property type="term" value="C:nucleus"/>
    <property type="evidence" value="ECO:0000318"/>
    <property type="project" value="GO_Central"/>
</dbReference>
<dbReference type="GO" id="GO:0005524">
    <property type="term" value="F:ATP binding"/>
    <property type="evidence" value="ECO:0007669"/>
    <property type="project" value="UniProtKB-KW"/>
</dbReference>
<dbReference type="GO" id="GO:0004707">
    <property type="term" value="F:MAP kinase activity"/>
    <property type="evidence" value="ECO:0007669"/>
    <property type="project" value="UniProtKB-EC"/>
</dbReference>
<dbReference type="GO" id="GO:0106310">
    <property type="term" value="F:protein serine kinase activity"/>
    <property type="evidence" value="ECO:0007669"/>
    <property type="project" value="RHEA"/>
</dbReference>
<dbReference type="GO" id="GO:0004674">
    <property type="term" value="F:protein serine/threonine kinase activity"/>
    <property type="evidence" value="ECO:0000318"/>
    <property type="project" value="GO_Central"/>
</dbReference>
<dbReference type="GO" id="GO:0071474">
    <property type="term" value="P:cellular hyperosmotic response"/>
    <property type="evidence" value="ECO:0000315"/>
    <property type="project" value="AspGD"/>
</dbReference>
<dbReference type="GO" id="GO:0034605">
    <property type="term" value="P:cellular response to heat"/>
    <property type="evidence" value="ECO:0000315"/>
    <property type="project" value="AspGD"/>
</dbReference>
<dbReference type="GO" id="GO:0071470">
    <property type="term" value="P:cellular response to osmotic stress"/>
    <property type="evidence" value="ECO:0000315"/>
    <property type="project" value="AspGD"/>
</dbReference>
<dbReference type="GO" id="GO:0034599">
    <property type="term" value="P:cellular response to oxidative stress"/>
    <property type="evidence" value="ECO:0000315"/>
    <property type="project" value="AspGD"/>
</dbReference>
<dbReference type="GO" id="GO:0007231">
    <property type="term" value="P:osmosensory signaling pathway"/>
    <property type="evidence" value="ECO:0000318"/>
    <property type="project" value="GO_Central"/>
</dbReference>
<dbReference type="GO" id="GO:0051403">
    <property type="term" value="P:stress-activated MAPK cascade"/>
    <property type="evidence" value="ECO:0000318"/>
    <property type="project" value="GO_Central"/>
</dbReference>
<dbReference type="CDD" id="cd07856">
    <property type="entry name" value="STKc_Sty1_Hog1"/>
    <property type="match status" value="1"/>
</dbReference>
<dbReference type="FunFam" id="1.10.510.10:FF:000049">
    <property type="entry name" value="Mitogen-activated protein kinase"/>
    <property type="match status" value="1"/>
</dbReference>
<dbReference type="FunFam" id="3.30.200.20:FF:000050">
    <property type="entry name" value="Mitogen-activated protein kinase"/>
    <property type="match status" value="1"/>
</dbReference>
<dbReference type="Gene3D" id="3.30.200.20">
    <property type="entry name" value="Phosphorylase Kinase, domain 1"/>
    <property type="match status" value="1"/>
</dbReference>
<dbReference type="Gene3D" id="1.10.510.10">
    <property type="entry name" value="Transferase(Phosphotransferase) domain 1"/>
    <property type="match status" value="1"/>
</dbReference>
<dbReference type="InterPro" id="IPR011009">
    <property type="entry name" value="Kinase-like_dom_sf"/>
</dbReference>
<dbReference type="InterPro" id="IPR050117">
    <property type="entry name" value="MAP_kinase"/>
</dbReference>
<dbReference type="InterPro" id="IPR003527">
    <property type="entry name" value="MAP_kinase_CS"/>
</dbReference>
<dbReference type="InterPro" id="IPR008352">
    <property type="entry name" value="MAPK_p38-like"/>
</dbReference>
<dbReference type="InterPro" id="IPR038783">
    <property type="entry name" value="MAPK_Sty1/Hog1"/>
</dbReference>
<dbReference type="InterPro" id="IPR000719">
    <property type="entry name" value="Prot_kinase_dom"/>
</dbReference>
<dbReference type="InterPro" id="IPR017441">
    <property type="entry name" value="Protein_kinase_ATP_BS"/>
</dbReference>
<dbReference type="InterPro" id="IPR008271">
    <property type="entry name" value="Ser/Thr_kinase_AS"/>
</dbReference>
<dbReference type="PANTHER" id="PTHR24055">
    <property type="entry name" value="MITOGEN-ACTIVATED PROTEIN KINASE"/>
    <property type="match status" value="1"/>
</dbReference>
<dbReference type="Pfam" id="PF00069">
    <property type="entry name" value="Pkinase"/>
    <property type="match status" value="1"/>
</dbReference>
<dbReference type="PRINTS" id="PR01773">
    <property type="entry name" value="P38MAPKINASE"/>
</dbReference>
<dbReference type="SMART" id="SM00220">
    <property type="entry name" value="S_TKc"/>
    <property type="match status" value="1"/>
</dbReference>
<dbReference type="SUPFAM" id="SSF56112">
    <property type="entry name" value="Protein kinase-like (PK-like)"/>
    <property type="match status" value="1"/>
</dbReference>
<dbReference type="PROSITE" id="PS01351">
    <property type="entry name" value="MAPK"/>
    <property type="match status" value="1"/>
</dbReference>
<dbReference type="PROSITE" id="PS00107">
    <property type="entry name" value="PROTEIN_KINASE_ATP"/>
    <property type="match status" value="1"/>
</dbReference>
<dbReference type="PROSITE" id="PS50011">
    <property type="entry name" value="PROTEIN_KINASE_DOM"/>
    <property type="match status" value="1"/>
</dbReference>
<dbReference type="PROSITE" id="PS00108">
    <property type="entry name" value="PROTEIN_KINASE_ST"/>
    <property type="match status" value="1"/>
</dbReference>
<organism>
    <name type="scientific">Aspergillus fumigatus (strain ATCC MYA-4609 / CBS 101355 / FGSC A1100 / Af293)</name>
    <name type="common">Neosartorya fumigata</name>
    <dbReference type="NCBI Taxonomy" id="330879"/>
    <lineage>
        <taxon>Eukaryota</taxon>
        <taxon>Fungi</taxon>
        <taxon>Dikarya</taxon>
        <taxon>Ascomycota</taxon>
        <taxon>Pezizomycotina</taxon>
        <taxon>Eurotiomycetes</taxon>
        <taxon>Eurotiomycetidae</taxon>
        <taxon>Eurotiales</taxon>
        <taxon>Aspergillaceae</taxon>
        <taxon>Aspergillus</taxon>
        <taxon>Aspergillus subgen. Fumigati</taxon>
    </lineage>
</organism>
<protein>
    <recommendedName>
        <fullName evidence="16">Mitogen-activated protein kinase sakA</fullName>
        <shortName evidence="16">MAP kinase hog1</shortName>
        <ecNumber evidence="10 11">2.7.11.24</ecNumber>
    </recommendedName>
</protein>
<accession>Q4WSF6</accession>
<accession>Q6MYJ4</accession>
<accession>Q8TFX5</accession>
<sequence>MAEFVRAQIFGTTFEITSRYTDLQPVGMGAFGLVCSARDQLTGQPVAVKKIMKPFSTPVLSKRTYRELKLLKHLRHENIISLSDIFISPLEDIYFVTELLGTDLHRLLTSRPLEKQFIQYFLYQILRGLKYVHSAGVVHRDLKPSNILINENCDLKICDFGLARIQDPQMTGYVSTRYYRAPEIMLTWQKYDVEVDIWSAGCIFAEMLEGKPLFPGKDHVNQFSIITELLGTPPDDVIQTICSENTLRFVKSLPKRERQPLANKFKNADPEAVDLLERMLVFDPKKRIRAGEALAHEYLSPYHDPTDEPEAEEKFDWSFNDADLPVDTWKIMMYSEILDFHNIDQGNDAGQVLMEGGVAQAQQNYA</sequence>